<keyword id="KW-0648">Protein biosynthesis</keyword>
<keyword id="KW-1185">Reference proteome</keyword>
<keyword id="KW-0808">Transferase</keyword>
<comment type="function">
    <text evidence="1">Attaches a formyl group to the free amino group of methionyl-tRNA(fMet). The formyl group appears to play a dual role in the initiator identity of N-formylmethionyl-tRNA by promoting its recognition by IF2 and preventing the misappropriation of this tRNA by the elongation apparatus.</text>
</comment>
<comment type="catalytic activity">
    <reaction evidence="1">
        <text>L-methionyl-tRNA(fMet) + (6R)-10-formyltetrahydrofolate = N-formyl-L-methionyl-tRNA(fMet) + (6S)-5,6,7,8-tetrahydrofolate + H(+)</text>
        <dbReference type="Rhea" id="RHEA:24380"/>
        <dbReference type="Rhea" id="RHEA-COMP:9952"/>
        <dbReference type="Rhea" id="RHEA-COMP:9953"/>
        <dbReference type="ChEBI" id="CHEBI:15378"/>
        <dbReference type="ChEBI" id="CHEBI:57453"/>
        <dbReference type="ChEBI" id="CHEBI:78530"/>
        <dbReference type="ChEBI" id="CHEBI:78844"/>
        <dbReference type="ChEBI" id="CHEBI:195366"/>
        <dbReference type="EC" id="2.1.2.9"/>
    </reaction>
</comment>
<comment type="similarity">
    <text evidence="1">Belongs to the Fmt family.</text>
</comment>
<protein>
    <recommendedName>
        <fullName evidence="1">Methionyl-tRNA formyltransferase</fullName>
        <ecNumber evidence="1">2.1.2.9</ecNumber>
    </recommendedName>
</protein>
<accession>A4J579</accession>
<dbReference type="EC" id="2.1.2.9" evidence="1"/>
<dbReference type="EMBL" id="CP000612">
    <property type="protein sequence ID" value="ABO50232.1"/>
    <property type="molecule type" value="Genomic_DNA"/>
</dbReference>
<dbReference type="RefSeq" id="WP_011878046.1">
    <property type="nucleotide sequence ID" value="NC_009253.1"/>
</dbReference>
<dbReference type="SMR" id="A4J579"/>
<dbReference type="STRING" id="349161.Dred_1705"/>
<dbReference type="KEGG" id="drm:Dred_1705"/>
<dbReference type="eggNOG" id="COG0223">
    <property type="taxonomic scope" value="Bacteria"/>
</dbReference>
<dbReference type="HOGENOM" id="CLU_033347_1_1_9"/>
<dbReference type="OrthoDB" id="9802815at2"/>
<dbReference type="Proteomes" id="UP000001556">
    <property type="component" value="Chromosome"/>
</dbReference>
<dbReference type="GO" id="GO:0005829">
    <property type="term" value="C:cytosol"/>
    <property type="evidence" value="ECO:0007669"/>
    <property type="project" value="TreeGrafter"/>
</dbReference>
<dbReference type="GO" id="GO:0004479">
    <property type="term" value="F:methionyl-tRNA formyltransferase activity"/>
    <property type="evidence" value="ECO:0007669"/>
    <property type="project" value="UniProtKB-UniRule"/>
</dbReference>
<dbReference type="CDD" id="cd08646">
    <property type="entry name" value="FMT_core_Met-tRNA-FMT_N"/>
    <property type="match status" value="1"/>
</dbReference>
<dbReference type="CDD" id="cd08704">
    <property type="entry name" value="Met_tRNA_FMT_C"/>
    <property type="match status" value="1"/>
</dbReference>
<dbReference type="FunFam" id="3.40.50.12230:FF:000001">
    <property type="entry name" value="Methionyl-tRNA formyltransferase"/>
    <property type="match status" value="1"/>
</dbReference>
<dbReference type="Gene3D" id="3.40.50.12230">
    <property type="match status" value="1"/>
</dbReference>
<dbReference type="HAMAP" id="MF_00182">
    <property type="entry name" value="Formyl_trans"/>
    <property type="match status" value="1"/>
</dbReference>
<dbReference type="InterPro" id="IPR005794">
    <property type="entry name" value="Fmt"/>
</dbReference>
<dbReference type="InterPro" id="IPR005793">
    <property type="entry name" value="Formyl_trans_C"/>
</dbReference>
<dbReference type="InterPro" id="IPR002376">
    <property type="entry name" value="Formyl_transf_N"/>
</dbReference>
<dbReference type="InterPro" id="IPR036477">
    <property type="entry name" value="Formyl_transf_N_sf"/>
</dbReference>
<dbReference type="InterPro" id="IPR011034">
    <property type="entry name" value="Formyl_transferase-like_C_sf"/>
</dbReference>
<dbReference type="InterPro" id="IPR001555">
    <property type="entry name" value="GART_AS"/>
</dbReference>
<dbReference type="InterPro" id="IPR044135">
    <property type="entry name" value="Met-tRNA-FMT_C"/>
</dbReference>
<dbReference type="InterPro" id="IPR041711">
    <property type="entry name" value="Met-tRNA-FMT_N"/>
</dbReference>
<dbReference type="NCBIfam" id="TIGR00460">
    <property type="entry name" value="fmt"/>
    <property type="match status" value="1"/>
</dbReference>
<dbReference type="PANTHER" id="PTHR11138">
    <property type="entry name" value="METHIONYL-TRNA FORMYLTRANSFERASE"/>
    <property type="match status" value="1"/>
</dbReference>
<dbReference type="PANTHER" id="PTHR11138:SF5">
    <property type="entry name" value="METHIONYL-TRNA FORMYLTRANSFERASE, MITOCHONDRIAL"/>
    <property type="match status" value="1"/>
</dbReference>
<dbReference type="Pfam" id="PF02911">
    <property type="entry name" value="Formyl_trans_C"/>
    <property type="match status" value="1"/>
</dbReference>
<dbReference type="Pfam" id="PF00551">
    <property type="entry name" value="Formyl_trans_N"/>
    <property type="match status" value="1"/>
</dbReference>
<dbReference type="SUPFAM" id="SSF50486">
    <property type="entry name" value="FMT C-terminal domain-like"/>
    <property type="match status" value="1"/>
</dbReference>
<dbReference type="SUPFAM" id="SSF53328">
    <property type="entry name" value="Formyltransferase"/>
    <property type="match status" value="1"/>
</dbReference>
<dbReference type="PROSITE" id="PS00373">
    <property type="entry name" value="GART"/>
    <property type="match status" value="1"/>
</dbReference>
<organism>
    <name type="scientific">Desulforamulus reducens (strain ATCC BAA-1160 / DSM 100696 / MI-1)</name>
    <name type="common">Desulfotomaculum reducens</name>
    <dbReference type="NCBI Taxonomy" id="349161"/>
    <lineage>
        <taxon>Bacteria</taxon>
        <taxon>Bacillati</taxon>
        <taxon>Bacillota</taxon>
        <taxon>Clostridia</taxon>
        <taxon>Eubacteriales</taxon>
        <taxon>Peptococcaceae</taxon>
        <taxon>Desulforamulus</taxon>
    </lineage>
</organism>
<proteinExistence type="inferred from homology"/>
<feature type="chain" id="PRO_1000071660" description="Methionyl-tRNA formyltransferase">
    <location>
        <begin position="1"/>
        <end position="317"/>
    </location>
</feature>
<feature type="binding site" evidence="1">
    <location>
        <begin position="109"/>
        <end position="112"/>
    </location>
    <ligand>
        <name>(6S)-5,6,7,8-tetrahydrofolate</name>
        <dbReference type="ChEBI" id="CHEBI:57453"/>
    </ligand>
</feature>
<sequence>MRIVFMGTPDFAATSLKALIDAGQQVVAVVTQPDKPKGRGRQVQPPPVKVLANEYKIPVLQPTSIKINEFQQTIEELKPECIVVVAYGKILPTEILELPPKGCINVHASLLPYYRGSAPIHWAIINGEEETGVTTMFMDKGMDTGDMILKSSVSIGPSDTVGAIHDKLASDGAKLLIETIHLLEEDCAPRIPQNHKLATYAPMLRKEHELIHWDLSAKDIHNHVRGMNPWPGTYTIWDNKILKIWQTTIPAHQNIDADPGTVLEVSPSGILVQTAGGQILIKELQLQGSRRMEVTEFLRGKQMSPGTVLGFEGGRGN</sequence>
<gene>
    <name evidence="1" type="primary">fmt</name>
    <name type="ordered locus">Dred_1705</name>
</gene>
<evidence type="ECO:0000255" key="1">
    <source>
        <dbReference type="HAMAP-Rule" id="MF_00182"/>
    </source>
</evidence>
<name>FMT_DESRM</name>
<reference key="1">
    <citation type="submission" date="2007-03" db="EMBL/GenBank/DDBJ databases">
        <title>Complete sequence of Desulfotomaculum reducens MI-1.</title>
        <authorList>
            <consortium name="US DOE Joint Genome Institute"/>
            <person name="Copeland A."/>
            <person name="Lucas S."/>
            <person name="Lapidus A."/>
            <person name="Barry K."/>
            <person name="Detter J.C."/>
            <person name="Glavina del Rio T."/>
            <person name="Hammon N."/>
            <person name="Israni S."/>
            <person name="Dalin E."/>
            <person name="Tice H."/>
            <person name="Pitluck S."/>
            <person name="Sims D."/>
            <person name="Brettin T."/>
            <person name="Bruce D."/>
            <person name="Han C."/>
            <person name="Tapia R."/>
            <person name="Schmutz J."/>
            <person name="Larimer F."/>
            <person name="Land M."/>
            <person name="Hauser L."/>
            <person name="Kyrpides N."/>
            <person name="Kim E."/>
            <person name="Tebo B.M."/>
            <person name="Richardson P."/>
        </authorList>
    </citation>
    <scope>NUCLEOTIDE SEQUENCE [LARGE SCALE GENOMIC DNA]</scope>
    <source>
        <strain>ATCC BAA-1160 / DSM 100696 / MI-1</strain>
    </source>
</reference>